<evidence type="ECO:0000250" key="1"/>
<evidence type="ECO:0000255" key="2"/>
<evidence type="ECO:0000256" key="3">
    <source>
        <dbReference type="SAM" id="MobiDB-lite"/>
    </source>
</evidence>
<evidence type="ECO:0000305" key="4"/>
<feature type="chain" id="PRO_0000246205" description="GPI ethanolamine phosphate transferase 1">
    <location>
        <begin position="1"/>
        <end position="921"/>
    </location>
</feature>
<feature type="transmembrane region" description="Helical" evidence="2">
    <location>
        <begin position="37"/>
        <end position="57"/>
    </location>
</feature>
<feature type="transmembrane region" description="Helical" evidence="2">
    <location>
        <begin position="386"/>
        <end position="406"/>
    </location>
</feature>
<feature type="transmembrane region" description="Helical" evidence="2">
    <location>
        <begin position="418"/>
        <end position="438"/>
    </location>
</feature>
<feature type="transmembrane region" description="Helical" evidence="2">
    <location>
        <begin position="441"/>
        <end position="461"/>
    </location>
</feature>
<feature type="transmembrane region" description="Helical" evidence="2">
    <location>
        <begin position="483"/>
        <end position="503"/>
    </location>
</feature>
<feature type="transmembrane region" description="Helical" evidence="2">
    <location>
        <begin position="509"/>
        <end position="529"/>
    </location>
</feature>
<feature type="transmembrane region" description="Helical" evidence="2">
    <location>
        <begin position="533"/>
        <end position="553"/>
    </location>
</feature>
<feature type="transmembrane region" description="Helical" evidence="2">
    <location>
        <begin position="561"/>
        <end position="581"/>
    </location>
</feature>
<feature type="transmembrane region" description="Helical" evidence="2">
    <location>
        <begin position="606"/>
        <end position="626"/>
    </location>
</feature>
<feature type="transmembrane region" description="Helical" evidence="2">
    <location>
        <begin position="640"/>
        <end position="660"/>
    </location>
</feature>
<feature type="transmembrane region" description="Helical" evidence="2">
    <location>
        <begin position="679"/>
        <end position="699"/>
    </location>
</feature>
<feature type="transmembrane region" description="Helical" evidence="2">
    <location>
        <begin position="752"/>
        <end position="772"/>
    </location>
</feature>
<feature type="transmembrane region" description="Helical" evidence="2">
    <location>
        <begin position="795"/>
        <end position="815"/>
    </location>
</feature>
<feature type="transmembrane region" description="Helical" evidence="2">
    <location>
        <begin position="825"/>
        <end position="845"/>
    </location>
</feature>
<feature type="transmembrane region" description="Helical" evidence="2">
    <location>
        <begin position="862"/>
        <end position="882"/>
    </location>
</feature>
<feature type="region of interest" description="Disordered" evidence="3">
    <location>
        <begin position="715"/>
        <end position="737"/>
    </location>
</feature>
<feature type="glycosylation site" description="N-linked (GlcNAc...) asparagine" evidence="2">
    <location>
        <position position="69"/>
    </location>
</feature>
<feature type="glycosylation site" description="N-linked (GlcNAc...) asparagine" evidence="2">
    <location>
        <position position="132"/>
    </location>
</feature>
<name>MCD4_CHAGB</name>
<keyword id="KW-0961">Cell wall biogenesis/degradation</keyword>
<keyword id="KW-0256">Endoplasmic reticulum</keyword>
<keyword id="KW-0325">Glycoprotein</keyword>
<keyword id="KW-0337">GPI-anchor biosynthesis</keyword>
<keyword id="KW-0472">Membrane</keyword>
<keyword id="KW-1185">Reference proteome</keyword>
<keyword id="KW-0808">Transferase</keyword>
<keyword id="KW-0812">Transmembrane</keyword>
<keyword id="KW-1133">Transmembrane helix</keyword>
<protein>
    <recommendedName>
        <fullName>GPI ethanolamine phosphate transferase 1</fullName>
        <ecNumber>2.-.-.-</ecNumber>
    </recommendedName>
</protein>
<accession>Q2H0X9</accession>
<organism>
    <name type="scientific">Chaetomium globosum (strain ATCC 6205 / CBS 148.51 / DSM 1962 / NBRC 6347 / NRRL 1970)</name>
    <name type="common">Soil fungus</name>
    <dbReference type="NCBI Taxonomy" id="306901"/>
    <lineage>
        <taxon>Eukaryota</taxon>
        <taxon>Fungi</taxon>
        <taxon>Dikarya</taxon>
        <taxon>Ascomycota</taxon>
        <taxon>Pezizomycotina</taxon>
        <taxon>Sordariomycetes</taxon>
        <taxon>Sordariomycetidae</taxon>
        <taxon>Sordariales</taxon>
        <taxon>Chaetomiaceae</taxon>
        <taxon>Chaetomium</taxon>
    </lineage>
</organism>
<sequence>MASFPRFRFLAIAVVFHLVKASVDPTTRRSSSALRRPGHVALIAGLYEDVSAVTTGWKLNPVNFDSVFNRSRHTWSWGSPDILPMFEQGAVPGRVDAYTYGAELEDFSLDGFALDLWVFDHVKELFAEARTNKTLNDALRQDRIVFFLHLLGLDTTGHSFRPYSKEYLNNIKVVDKGVQEITELMKDFYADDRTAFVFTADHGMSDWGNHGDGHPDNTRTPLIAWGSGVAKPQLYPGEVAPGHDEYSSDWNLDHIRRHDVEQADVAALMAYLAGTEFPANSVGELPLSFLTAGLKEKAEASLVNAQGILEQYRVKEEGKKLTELRYRPYEPLSDEGMATESRVAHIRQLIETGSYEEAIEESAALLKVGLGGLRYLQTYDWLFLRALITIGYLGWVAYALTTVIDLHVLHGRIQPSRTLIGTIISTSALTALYASFAISKSPLTYYAYAFFPVFFWEEVYARRESLTEGRKELFGHIKSSSNFVSLVFNCAVYVGIIESLALGYIHREILTILFVIGAFWPIAYGFSFLRQHMALSITWFLSCIAMSTFTLLPPAMTTEDVNMIMLGGALMVLVGIIYLILEDFVLSDFGWSEKPSSPRNHVSRTLVGIQIGLTLLAALVTRSSALSMQANQGLPRGNQVMGWVVLVVSLLMPLAYRAKPNNHYMHRILVIFLTCAPTFVILTISYEGLFYIAFSAVLVSWVRLEHAIYKFPSSSANGAARSAPSPAKPHNLETSQTLPSPFRPLTLRDARVALFFFVLFQAAFFSTGNVASVSSFSLDSVSRLIPIFDPFSQGAMLILKLLIPFALISANLGILNKRLGVAPSALFMVVMAISDILTLYFFWVVKDEGSWLEIGSTISHFVIASLLCVFVAALEGVSAMFIAGVEVSEDVDRAVGKGAVAEVLLEKTEAERDGGAGSGGK</sequence>
<dbReference type="EC" id="2.-.-.-"/>
<dbReference type="EMBL" id="CH408032">
    <property type="protein sequence ID" value="EAQ87948.1"/>
    <property type="molecule type" value="Genomic_DNA"/>
</dbReference>
<dbReference type="RefSeq" id="XP_001223781.1">
    <property type="nucleotide sequence ID" value="XM_001223780.1"/>
</dbReference>
<dbReference type="FunCoup" id="Q2H0X9">
    <property type="interactions" value="432"/>
</dbReference>
<dbReference type="STRING" id="306901.Q2H0X9"/>
<dbReference type="GlyCosmos" id="Q2H0X9">
    <property type="glycosylation" value="2 sites, No reported glycans"/>
</dbReference>
<dbReference type="GeneID" id="4391572"/>
<dbReference type="VEuPathDB" id="FungiDB:CHGG_04567"/>
<dbReference type="eggNOG" id="KOG2124">
    <property type="taxonomic scope" value="Eukaryota"/>
</dbReference>
<dbReference type="HOGENOM" id="CLU_007676_0_0_1"/>
<dbReference type="InParanoid" id="Q2H0X9"/>
<dbReference type="OMA" id="QSYFHRE"/>
<dbReference type="OrthoDB" id="2748310at2759"/>
<dbReference type="UniPathway" id="UPA00196"/>
<dbReference type="Proteomes" id="UP000001056">
    <property type="component" value="Unassembled WGS sequence"/>
</dbReference>
<dbReference type="GO" id="GO:0005789">
    <property type="term" value="C:endoplasmic reticulum membrane"/>
    <property type="evidence" value="ECO:0007669"/>
    <property type="project" value="UniProtKB-SubCell"/>
</dbReference>
<dbReference type="GO" id="GO:0051377">
    <property type="term" value="F:mannose-ethanolamine phosphotransferase activity"/>
    <property type="evidence" value="ECO:0007669"/>
    <property type="project" value="InterPro"/>
</dbReference>
<dbReference type="GO" id="GO:0071555">
    <property type="term" value="P:cell wall organization"/>
    <property type="evidence" value="ECO:0007669"/>
    <property type="project" value="UniProtKB-KW"/>
</dbReference>
<dbReference type="GO" id="GO:0006506">
    <property type="term" value="P:GPI anchor biosynthetic process"/>
    <property type="evidence" value="ECO:0007669"/>
    <property type="project" value="UniProtKB-UniPathway"/>
</dbReference>
<dbReference type="CDD" id="cd16020">
    <property type="entry name" value="GPI_EPT_1"/>
    <property type="match status" value="1"/>
</dbReference>
<dbReference type="FunFam" id="3.40.720.10:FF:000015">
    <property type="entry name" value="GPI ethanolamine phosphate transferase 1"/>
    <property type="match status" value="1"/>
</dbReference>
<dbReference type="Gene3D" id="3.40.720.10">
    <property type="entry name" value="Alkaline Phosphatase, subunit A"/>
    <property type="match status" value="1"/>
</dbReference>
<dbReference type="InterPro" id="IPR017850">
    <property type="entry name" value="Alkaline_phosphatase_core_sf"/>
</dbReference>
<dbReference type="InterPro" id="IPR007070">
    <property type="entry name" value="GPI_EtnP_transferase_1"/>
</dbReference>
<dbReference type="InterPro" id="IPR017852">
    <property type="entry name" value="GPI_EtnP_transferase_1_C"/>
</dbReference>
<dbReference type="InterPro" id="IPR002591">
    <property type="entry name" value="Phosphodiest/P_Trfase"/>
</dbReference>
<dbReference type="InterPro" id="IPR037671">
    <property type="entry name" value="PIGN_N"/>
</dbReference>
<dbReference type="PANTHER" id="PTHR12250:SF0">
    <property type="entry name" value="GPI ETHANOLAMINE PHOSPHATE TRANSFERASE 1"/>
    <property type="match status" value="1"/>
</dbReference>
<dbReference type="PANTHER" id="PTHR12250">
    <property type="entry name" value="PHOSPHATIDYLINOSITOL GLYCAN, CLASS N"/>
    <property type="match status" value="1"/>
</dbReference>
<dbReference type="Pfam" id="PF01663">
    <property type="entry name" value="Phosphodiest"/>
    <property type="match status" value="1"/>
</dbReference>
<dbReference type="Pfam" id="PF04987">
    <property type="entry name" value="PigN"/>
    <property type="match status" value="1"/>
</dbReference>
<dbReference type="SUPFAM" id="SSF53649">
    <property type="entry name" value="Alkaline phosphatase-like"/>
    <property type="match status" value="1"/>
</dbReference>
<comment type="function">
    <text evidence="1">Ethanolamine phosphate transferase involved in glycosylphosphatidylinositol-anchor biosynthesis. Transfers ethanolamine phosphate to the first alpha-1,4-linked mannose of the glycosylphosphatidylinositol precursor of GPI-anchor (By similarity).</text>
</comment>
<comment type="pathway">
    <text>Glycolipid biosynthesis; glycosylphosphatidylinositol-anchor biosynthesis.</text>
</comment>
<comment type="subcellular location">
    <subcellularLocation>
        <location evidence="1">Endoplasmic reticulum membrane</location>
        <topology evidence="1">Multi-pass membrane protein</topology>
    </subcellularLocation>
</comment>
<comment type="similarity">
    <text evidence="4">Belongs to the PIGG/PIGN/PIGO family. PIGN subfamily.</text>
</comment>
<proteinExistence type="inferred from homology"/>
<gene>
    <name type="primary">MCD4</name>
    <name type="ORF">CHGG_04567</name>
</gene>
<reference key="1">
    <citation type="journal article" date="2015" name="Genome Announc.">
        <title>Draft genome sequence of the cellulolytic fungus Chaetomium globosum.</title>
        <authorList>
            <person name="Cuomo C.A."/>
            <person name="Untereiner W.A."/>
            <person name="Ma L.-J."/>
            <person name="Grabherr M."/>
            <person name="Birren B.W."/>
        </authorList>
    </citation>
    <scope>NUCLEOTIDE SEQUENCE [LARGE SCALE GENOMIC DNA]</scope>
    <source>
        <strain>ATCC 6205 / CBS 148.51 / DSM 1962 / NBRC 6347 / NRRL 1970</strain>
    </source>
</reference>